<comment type="function">
    <text evidence="1">Catalyzes the acyloin condensation reaction between C atoms 2 and 3 of pyruvate and glyceraldehyde 3-phosphate to yield 1-deoxy-D-xylulose-5-phosphate (DXP).</text>
</comment>
<comment type="catalytic activity">
    <reaction evidence="1">
        <text>D-glyceraldehyde 3-phosphate + pyruvate + H(+) = 1-deoxy-D-xylulose 5-phosphate + CO2</text>
        <dbReference type="Rhea" id="RHEA:12605"/>
        <dbReference type="ChEBI" id="CHEBI:15361"/>
        <dbReference type="ChEBI" id="CHEBI:15378"/>
        <dbReference type="ChEBI" id="CHEBI:16526"/>
        <dbReference type="ChEBI" id="CHEBI:57792"/>
        <dbReference type="ChEBI" id="CHEBI:59776"/>
        <dbReference type="EC" id="2.2.1.7"/>
    </reaction>
</comment>
<comment type="cofactor">
    <cofactor evidence="1">
        <name>Mg(2+)</name>
        <dbReference type="ChEBI" id="CHEBI:18420"/>
    </cofactor>
    <text evidence="1">Binds 1 Mg(2+) ion per subunit.</text>
</comment>
<comment type="cofactor">
    <cofactor evidence="1">
        <name>thiamine diphosphate</name>
        <dbReference type="ChEBI" id="CHEBI:58937"/>
    </cofactor>
    <text evidence="1">Binds 1 thiamine pyrophosphate per subunit.</text>
</comment>
<comment type="pathway">
    <text evidence="1">Metabolic intermediate biosynthesis; 1-deoxy-D-xylulose 5-phosphate biosynthesis; 1-deoxy-D-xylulose 5-phosphate from D-glyceraldehyde 3-phosphate and pyruvate: step 1/1.</text>
</comment>
<comment type="subunit">
    <text evidence="1">Homodimer.</text>
</comment>
<comment type="similarity">
    <text evidence="1">Belongs to the transketolase family. DXPS subfamily.</text>
</comment>
<organism>
    <name type="scientific">Brucella melitensis biotype 1 (strain ATCC 23456 / CCUG 17765 / NCTC 10094 / 16M)</name>
    <dbReference type="NCBI Taxonomy" id="224914"/>
    <lineage>
        <taxon>Bacteria</taxon>
        <taxon>Pseudomonadati</taxon>
        <taxon>Pseudomonadota</taxon>
        <taxon>Alphaproteobacteria</taxon>
        <taxon>Hyphomicrobiales</taxon>
        <taxon>Brucellaceae</taxon>
        <taxon>Brucella/Ochrobactrum group</taxon>
        <taxon>Brucella</taxon>
    </lineage>
</organism>
<evidence type="ECO:0000255" key="1">
    <source>
        <dbReference type="HAMAP-Rule" id="MF_00315"/>
    </source>
</evidence>
<reference key="1">
    <citation type="journal article" date="2002" name="Proc. Natl. Acad. Sci. U.S.A.">
        <title>The genome sequence of the facultative intracellular pathogen Brucella melitensis.</title>
        <authorList>
            <person name="DelVecchio V.G."/>
            <person name="Kapatral V."/>
            <person name="Redkar R.J."/>
            <person name="Patra G."/>
            <person name="Mujer C."/>
            <person name="Los T."/>
            <person name="Ivanova N."/>
            <person name="Anderson I."/>
            <person name="Bhattacharyya A."/>
            <person name="Lykidis A."/>
            <person name="Reznik G."/>
            <person name="Jablonski L."/>
            <person name="Larsen N."/>
            <person name="D'Souza M."/>
            <person name="Bernal A."/>
            <person name="Mazur M."/>
            <person name="Goltsman E."/>
            <person name="Selkov E."/>
            <person name="Elzer P.H."/>
            <person name="Hagius S."/>
            <person name="O'Callaghan D."/>
            <person name="Letesson J.-J."/>
            <person name="Haselkorn R."/>
            <person name="Kyrpides N.C."/>
            <person name="Overbeek R."/>
        </authorList>
    </citation>
    <scope>NUCLEOTIDE SEQUENCE [LARGE SCALE GENOMIC DNA]</scope>
    <source>
        <strain>ATCC 23456 / CCUG 17765 / NCTC 10094 / 16M</strain>
    </source>
</reference>
<feature type="chain" id="PRO_0000189092" description="1-deoxy-D-xylulose-5-phosphate synthase">
    <location>
        <begin position="1"/>
        <end position="643"/>
    </location>
</feature>
<feature type="binding site" evidence="1">
    <location>
        <position position="78"/>
    </location>
    <ligand>
        <name>thiamine diphosphate</name>
        <dbReference type="ChEBI" id="CHEBI:58937"/>
    </ligand>
</feature>
<feature type="binding site" evidence="1">
    <location>
        <begin position="119"/>
        <end position="121"/>
    </location>
    <ligand>
        <name>thiamine diphosphate</name>
        <dbReference type="ChEBI" id="CHEBI:58937"/>
    </ligand>
</feature>
<feature type="binding site" evidence="1">
    <location>
        <position position="150"/>
    </location>
    <ligand>
        <name>Mg(2+)</name>
        <dbReference type="ChEBI" id="CHEBI:18420"/>
    </ligand>
</feature>
<feature type="binding site" evidence="1">
    <location>
        <begin position="151"/>
        <end position="152"/>
    </location>
    <ligand>
        <name>thiamine diphosphate</name>
        <dbReference type="ChEBI" id="CHEBI:58937"/>
    </ligand>
</feature>
<feature type="binding site" evidence="1">
    <location>
        <position position="179"/>
    </location>
    <ligand>
        <name>Mg(2+)</name>
        <dbReference type="ChEBI" id="CHEBI:18420"/>
    </ligand>
</feature>
<feature type="binding site" evidence="1">
    <location>
        <position position="179"/>
    </location>
    <ligand>
        <name>thiamine diphosphate</name>
        <dbReference type="ChEBI" id="CHEBI:58937"/>
    </ligand>
</feature>
<feature type="binding site" evidence="1">
    <location>
        <position position="288"/>
    </location>
    <ligand>
        <name>thiamine diphosphate</name>
        <dbReference type="ChEBI" id="CHEBI:58937"/>
    </ligand>
</feature>
<feature type="binding site" evidence="1">
    <location>
        <position position="370"/>
    </location>
    <ligand>
        <name>thiamine diphosphate</name>
        <dbReference type="ChEBI" id="CHEBI:58937"/>
    </ligand>
</feature>
<proteinExistence type="inferred from homology"/>
<keyword id="KW-0414">Isoprene biosynthesis</keyword>
<keyword id="KW-0460">Magnesium</keyword>
<keyword id="KW-0479">Metal-binding</keyword>
<keyword id="KW-0784">Thiamine biosynthesis</keyword>
<keyword id="KW-0786">Thiamine pyrophosphate</keyword>
<keyword id="KW-0808">Transferase</keyword>
<protein>
    <recommendedName>
        <fullName evidence="1">1-deoxy-D-xylulose-5-phosphate synthase</fullName>
        <ecNumber evidence="1">2.2.1.7</ecNumber>
    </recommendedName>
    <alternativeName>
        <fullName evidence="1">1-deoxyxylulose-5-phosphate synthase</fullName>
        <shortName evidence="1">DXP synthase</shortName>
        <shortName evidence="1">DXPS</shortName>
    </alternativeName>
</protein>
<name>DXS_BRUME</name>
<gene>
    <name evidence="1" type="primary">dxs</name>
    <name type="ordered locus">BMEI1498</name>
</gene>
<accession>Q8YFM2</accession>
<sequence>MSRPSTPLLDKAPTPDRLRALPEQDLPQLAEELRTELIDAVSTTGGHLGAGLGVVELTVALHHVFNTPYDRIIWDVGHQAYPHKILTGRRDRIRTLRQAGGLSGFTKRAESEYDPFGAAHSSTSISAGLGMAVASELSGEKRNVIAVIGDGSMSAGMAYEAMNNAGALDARLIVILNDNDMSIAPPTGAMSAYLARLVSGRTYRSVREAAKQVAQKLPKFLQDKARKSEEYARAFFTGGTLFEELGFYYVGPIDGHNLDHLLPVLKNVRDTQKGPVLIHVVTQKGKGYAPAEAAADKYHGVNKFDVITGKQAKPPANAPSYTKIFGTSLIEEARHDDKIVAVTAAMPTGTGLDLFGEAFPKRVFDVGIAEQHAVTFAAGLASEGYKPFCAIYSTFLQRGYDQVVHDVSIQNLPVRFPIDRAGLVGADGPTHAGSFDTGFLAALPGFVVMAASDEAELRHMVRTAAEYDEGPISFRYPRGDGVGVDLPERGSVLEIGKGRIVREGTKVALLSFGTRLQECLAAAEELGAAGLSTTVADARFAKPLDHDLIRRLAREHEVLVMVEEGAVGGFGSHVLQFLATDGLLDRGFKVRALTLPDIYQDHGKPDAMYAEAGLDRTGIVRTVFAALHRDELGHEALPTPFRA</sequence>
<dbReference type="EC" id="2.2.1.7" evidence="1"/>
<dbReference type="EMBL" id="AE008917">
    <property type="protein sequence ID" value="AAL52679.1"/>
    <property type="molecule type" value="Genomic_DNA"/>
</dbReference>
<dbReference type="PIR" id="AD3439">
    <property type="entry name" value="AD3439"/>
</dbReference>
<dbReference type="RefSeq" id="WP_004686580.1">
    <property type="nucleotide sequence ID" value="NZ_GG703778.1"/>
</dbReference>
<dbReference type="SMR" id="Q8YFM2"/>
<dbReference type="GeneID" id="29594346"/>
<dbReference type="KEGG" id="bme:BMEI1498"/>
<dbReference type="KEGG" id="bmel:DK63_1992"/>
<dbReference type="PATRIC" id="fig|224914.52.peg.2093"/>
<dbReference type="eggNOG" id="COG1154">
    <property type="taxonomic scope" value="Bacteria"/>
</dbReference>
<dbReference type="PhylomeDB" id="Q8YFM2"/>
<dbReference type="UniPathway" id="UPA00064">
    <property type="reaction ID" value="UER00091"/>
</dbReference>
<dbReference type="Proteomes" id="UP000000419">
    <property type="component" value="Chromosome I"/>
</dbReference>
<dbReference type="GO" id="GO:0008661">
    <property type="term" value="F:1-deoxy-D-xylulose-5-phosphate synthase activity"/>
    <property type="evidence" value="ECO:0007669"/>
    <property type="project" value="UniProtKB-UniRule"/>
</dbReference>
<dbReference type="GO" id="GO:0000287">
    <property type="term" value="F:magnesium ion binding"/>
    <property type="evidence" value="ECO:0007669"/>
    <property type="project" value="UniProtKB-UniRule"/>
</dbReference>
<dbReference type="GO" id="GO:0030976">
    <property type="term" value="F:thiamine pyrophosphate binding"/>
    <property type="evidence" value="ECO:0007669"/>
    <property type="project" value="UniProtKB-UniRule"/>
</dbReference>
<dbReference type="GO" id="GO:0052865">
    <property type="term" value="P:1-deoxy-D-xylulose 5-phosphate biosynthetic process"/>
    <property type="evidence" value="ECO:0007669"/>
    <property type="project" value="UniProtKB-UniPathway"/>
</dbReference>
<dbReference type="GO" id="GO:0019682">
    <property type="term" value="P:glyceraldehyde-3-phosphate metabolic process"/>
    <property type="evidence" value="ECO:0007669"/>
    <property type="project" value="UniProtKB-ARBA"/>
</dbReference>
<dbReference type="GO" id="GO:0016114">
    <property type="term" value="P:terpenoid biosynthetic process"/>
    <property type="evidence" value="ECO:0007669"/>
    <property type="project" value="UniProtKB-UniRule"/>
</dbReference>
<dbReference type="GO" id="GO:0009228">
    <property type="term" value="P:thiamine biosynthetic process"/>
    <property type="evidence" value="ECO:0007669"/>
    <property type="project" value="UniProtKB-UniRule"/>
</dbReference>
<dbReference type="CDD" id="cd02007">
    <property type="entry name" value="TPP_DXS"/>
    <property type="match status" value="1"/>
</dbReference>
<dbReference type="CDD" id="cd07033">
    <property type="entry name" value="TPP_PYR_DXS_TK_like"/>
    <property type="match status" value="1"/>
</dbReference>
<dbReference type="FunFam" id="3.40.50.920:FF:000002">
    <property type="entry name" value="1-deoxy-D-xylulose-5-phosphate synthase"/>
    <property type="match status" value="1"/>
</dbReference>
<dbReference type="FunFam" id="3.40.50.970:FF:000005">
    <property type="entry name" value="1-deoxy-D-xylulose-5-phosphate synthase"/>
    <property type="match status" value="1"/>
</dbReference>
<dbReference type="Gene3D" id="3.40.50.920">
    <property type="match status" value="1"/>
</dbReference>
<dbReference type="Gene3D" id="3.40.50.970">
    <property type="match status" value="2"/>
</dbReference>
<dbReference type="HAMAP" id="MF_00315">
    <property type="entry name" value="DXP_synth"/>
    <property type="match status" value="1"/>
</dbReference>
<dbReference type="InterPro" id="IPR005477">
    <property type="entry name" value="Dxylulose-5-P_synthase"/>
</dbReference>
<dbReference type="InterPro" id="IPR029061">
    <property type="entry name" value="THDP-binding"/>
</dbReference>
<dbReference type="InterPro" id="IPR009014">
    <property type="entry name" value="Transketo_C/PFOR_II"/>
</dbReference>
<dbReference type="InterPro" id="IPR005475">
    <property type="entry name" value="Transketolase-like_Pyr-bd"/>
</dbReference>
<dbReference type="InterPro" id="IPR020826">
    <property type="entry name" value="Transketolase_BS"/>
</dbReference>
<dbReference type="InterPro" id="IPR033248">
    <property type="entry name" value="Transketolase_C"/>
</dbReference>
<dbReference type="InterPro" id="IPR049557">
    <property type="entry name" value="Transketolase_CS"/>
</dbReference>
<dbReference type="NCBIfam" id="TIGR00204">
    <property type="entry name" value="dxs"/>
    <property type="match status" value="1"/>
</dbReference>
<dbReference type="NCBIfam" id="NF003933">
    <property type="entry name" value="PRK05444.2-2"/>
    <property type="match status" value="1"/>
</dbReference>
<dbReference type="PANTHER" id="PTHR43322">
    <property type="entry name" value="1-D-DEOXYXYLULOSE 5-PHOSPHATE SYNTHASE-RELATED"/>
    <property type="match status" value="1"/>
</dbReference>
<dbReference type="PANTHER" id="PTHR43322:SF5">
    <property type="entry name" value="1-DEOXY-D-XYLULOSE-5-PHOSPHATE SYNTHASE, CHLOROPLASTIC"/>
    <property type="match status" value="1"/>
</dbReference>
<dbReference type="Pfam" id="PF13292">
    <property type="entry name" value="DXP_synthase_N"/>
    <property type="match status" value="1"/>
</dbReference>
<dbReference type="Pfam" id="PF02779">
    <property type="entry name" value="Transket_pyr"/>
    <property type="match status" value="1"/>
</dbReference>
<dbReference type="Pfam" id="PF02780">
    <property type="entry name" value="Transketolase_C"/>
    <property type="match status" value="1"/>
</dbReference>
<dbReference type="SMART" id="SM00861">
    <property type="entry name" value="Transket_pyr"/>
    <property type="match status" value="1"/>
</dbReference>
<dbReference type="SUPFAM" id="SSF52518">
    <property type="entry name" value="Thiamin diphosphate-binding fold (THDP-binding)"/>
    <property type="match status" value="2"/>
</dbReference>
<dbReference type="SUPFAM" id="SSF52922">
    <property type="entry name" value="TK C-terminal domain-like"/>
    <property type="match status" value="1"/>
</dbReference>
<dbReference type="PROSITE" id="PS00801">
    <property type="entry name" value="TRANSKETOLASE_1"/>
    <property type="match status" value="1"/>
</dbReference>
<dbReference type="PROSITE" id="PS00802">
    <property type="entry name" value="TRANSKETOLASE_2"/>
    <property type="match status" value="1"/>
</dbReference>